<sequence length="412" mass="45162">MPLSVSLPSKNYDYDYDSVQPYFYFEEEEENFYLAAQQRSSELQPPAPSEDIWKKFELLPAPPLSPSCRSNLAAASCFPSTADQLEMVTELLGGDMVNQSSICDPDDESFVKSIIIRDCMWSGFSAAAKLEKVVSEKLATYKASRREGGPAAASRPGPPPSGPPPPPAGPAASAGLYLHDLGAAAAGCIGSSVVFPCPLGRRGPPGAGPAALLGVDAPPTAGGGSEEEQEEDEEIDVVTLAEANESESSTESSTEASEEHCKPHHSPLVLERCHVNIHQHNYAAPPSTKVEYPAAKRLKLDSGRVLKQVSNNRKCSSPRTSDSEVNDKRRTHNVLERQRRNELKLSFFALRDQIPEVANNEKAPKVVILKRATEYVLSIQSDEHRLIAEKEQLRRRREQLKHKLEQLRNSRA</sequence>
<accession>P0C0N8</accession>
<accession>P06647</accession>
<organism>
    <name type="scientific">Avian retrovirus MH2E21</name>
    <dbReference type="NCBI Taxonomy" id="11916"/>
    <lineage>
        <taxon>Viruses</taxon>
        <taxon>Riboviria</taxon>
        <taxon>Pararnavirae</taxon>
        <taxon>Artverviricota</taxon>
        <taxon>Revtraviricetes</taxon>
        <taxon>Ortervirales</taxon>
        <taxon>Retroviridae</taxon>
        <taxon>Orthoretrovirinae</taxon>
        <taxon>Alpharetrovirus</taxon>
        <taxon>Avian retrovirus MH2</taxon>
    </lineage>
</organism>
<protein>
    <recommendedName>
        <fullName>Viral myc transforming protein</fullName>
        <shortName>v-Myc</shortName>
    </recommendedName>
</protein>
<comment type="function">
    <text evidence="1">Transforms avian and murine macrophages and fibroblasts as well as murine B-lymphoid cells.</text>
</comment>
<comment type="subunit">
    <text>Efficient DNA binding requires dimerization with another bHLH protein.</text>
</comment>
<comment type="subcellular location">
    <subcellularLocation>
        <location evidence="1">Host nucleus</location>
    </subcellularLocation>
</comment>
<comment type="miscellaneous">
    <text>This protein is synthesized as a Gag-vMyc chimeric protein. The sequence shown here corresponds to the Myc homolog fragment of the chimera.</text>
</comment>
<comment type="miscellaneous">
    <text>The MH2E21 virus appears to be a recombinant between ring-necked pheasant virus and a deletion mutant of MH2 that was constructed in vitro. The MH2E21 virus lacks Gag, Pol and Env genes, and thus needs a helper virus to reproduce.</text>
</comment>
<comment type="sequence caution" evidence="4">
    <conflict type="erroneous initiation">
        <sequence resource="EMBL-CDS" id="AAA42389"/>
    </conflict>
</comment>
<organismHost>
    <name type="scientific">Galliformes</name>
    <dbReference type="NCBI Taxonomy" id="8976"/>
</organismHost>
<gene>
    <name type="primary">MYC</name>
</gene>
<name>MYC_AVIME</name>
<evidence type="ECO:0000250" key="1"/>
<evidence type="ECO:0000255" key="2">
    <source>
        <dbReference type="PROSITE-ProRule" id="PRU00981"/>
    </source>
</evidence>
<evidence type="ECO:0000256" key="3">
    <source>
        <dbReference type="SAM" id="MobiDB-lite"/>
    </source>
</evidence>
<evidence type="ECO:0000305" key="4"/>
<reference key="1">
    <citation type="journal article" date="1986" name="J. Virol.">
        <title>Structure and transforming function of transduced mutant alleles of the chicken c-myc gene.</title>
        <authorList>
            <person name="Patschinsky T."/>
            <person name="Jansen H.W."/>
            <person name="Bloecker H."/>
            <person name="Frank R."/>
            <person name="Bister K."/>
        </authorList>
    </citation>
    <scope>NUCLEOTIDE SEQUENCE [GENOMIC RNA]</scope>
</reference>
<dbReference type="EMBL" id="M14008">
    <property type="protein sequence ID" value="AAA42389.1"/>
    <property type="status" value="ALT_INIT"/>
    <property type="molecule type" value="Genomic_RNA"/>
</dbReference>
<dbReference type="PIR" id="A29285">
    <property type="entry name" value="TVFV2E"/>
</dbReference>
<dbReference type="SMR" id="P0C0N8"/>
<dbReference type="KEGG" id="vg:1491953"/>
<dbReference type="Proteomes" id="UP000103063">
    <property type="component" value="Segment"/>
</dbReference>
<dbReference type="GO" id="GO:0042025">
    <property type="term" value="C:host cell nucleus"/>
    <property type="evidence" value="ECO:0007669"/>
    <property type="project" value="UniProtKB-SubCell"/>
</dbReference>
<dbReference type="GO" id="GO:0003677">
    <property type="term" value="F:DNA binding"/>
    <property type="evidence" value="ECO:0007669"/>
    <property type="project" value="UniProtKB-KW"/>
</dbReference>
<dbReference type="GO" id="GO:0003700">
    <property type="term" value="F:DNA-binding transcription factor activity"/>
    <property type="evidence" value="ECO:0007669"/>
    <property type="project" value="InterPro"/>
</dbReference>
<dbReference type="GO" id="GO:0046983">
    <property type="term" value="F:protein dimerization activity"/>
    <property type="evidence" value="ECO:0007669"/>
    <property type="project" value="InterPro"/>
</dbReference>
<dbReference type="CDD" id="cd11458">
    <property type="entry name" value="bHLHzip_c-Myc"/>
    <property type="match status" value="1"/>
</dbReference>
<dbReference type="FunFam" id="4.10.280.10:FF:000019">
    <property type="entry name" value="Myc proto-oncogene protein"/>
    <property type="match status" value="1"/>
</dbReference>
<dbReference type="Gene3D" id="4.10.280.10">
    <property type="entry name" value="Helix-loop-helix DNA-binding domain"/>
    <property type="match status" value="1"/>
</dbReference>
<dbReference type="InterPro" id="IPR011598">
    <property type="entry name" value="bHLH_dom"/>
</dbReference>
<dbReference type="InterPro" id="IPR036638">
    <property type="entry name" value="HLH_DNA-bd_sf"/>
</dbReference>
<dbReference type="InterPro" id="IPR003327">
    <property type="entry name" value="Myc-LZ"/>
</dbReference>
<dbReference type="InterPro" id="IPR050433">
    <property type="entry name" value="Myc_transcription_factors"/>
</dbReference>
<dbReference type="InterPro" id="IPR002418">
    <property type="entry name" value="Tscrpt_reg_Myc"/>
</dbReference>
<dbReference type="InterPro" id="IPR012682">
    <property type="entry name" value="Tscrpt_reg_Myc_N"/>
</dbReference>
<dbReference type="PANTHER" id="PTHR45851">
    <property type="entry name" value="MYC PROTO-ONCOGENE"/>
    <property type="match status" value="1"/>
</dbReference>
<dbReference type="Pfam" id="PF00010">
    <property type="entry name" value="HLH"/>
    <property type="match status" value="1"/>
</dbReference>
<dbReference type="Pfam" id="PF02344">
    <property type="entry name" value="Myc-LZ"/>
    <property type="match status" value="1"/>
</dbReference>
<dbReference type="Pfam" id="PF01056">
    <property type="entry name" value="Myc_N"/>
    <property type="match status" value="2"/>
</dbReference>
<dbReference type="PIRSF" id="PIRSF001705">
    <property type="entry name" value="Myc_protein"/>
    <property type="match status" value="1"/>
</dbReference>
<dbReference type="PRINTS" id="PR00044">
    <property type="entry name" value="LEUZIPPRMYC"/>
</dbReference>
<dbReference type="SMART" id="SM00353">
    <property type="entry name" value="HLH"/>
    <property type="match status" value="1"/>
</dbReference>
<dbReference type="SUPFAM" id="SSF47459">
    <property type="entry name" value="HLH, helix-loop-helix DNA-binding domain"/>
    <property type="match status" value="1"/>
</dbReference>
<dbReference type="PROSITE" id="PS50888">
    <property type="entry name" value="BHLH"/>
    <property type="match status" value="1"/>
</dbReference>
<feature type="chain" id="PRO_0000127305" description="Viral myc transforming protein">
    <location>
        <begin position="1"/>
        <end position="412"/>
    </location>
</feature>
<feature type="domain" description="bHLH" evidence="2">
    <location>
        <begin position="327"/>
        <end position="379"/>
    </location>
</feature>
<feature type="region of interest" description="Disordered" evidence="3">
    <location>
        <begin position="144"/>
        <end position="173"/>
    </location>
</feature>
<feature type="region of interest" description="Disordered" evidence="3">
    <location>
        <begin position="208"/>
        <end position="263"/>
    </location>
</feature>
<feature type="region of interest" description="Disordered" evidence="3">
    <location>
        <begin position="309"/>
        <end position="328"/>
    </location>
</feature>
<feature type="region of interest" description="Leucine-zipper">
    <location>
        <begin position="386"/>
        <end position="407"/>
    </location>
</feature>
<feature type="compositionally biased region" description="Pro residues" evidence="3">
    <location>
        <begin position="156"/>
        <end position="169"/>
    </location>
</feature>
<feature type="compositionally biased region" description="Acidic residues" evidence="3">
    <location>
        <begin position="225"/>
        <end position="236"/>
    </location>
</feature>
<feature type="compositionally biased region" description="Low complexity" evidence="3">
    <location>
        <begin position="241"/>
        <end position="255"/>
    </location>
</feature>
<feature type="compositionally biased region" description="Polar residues" evidence="3">
    <location>
        <begin position="309"/>
        <end position="320"/>
    </location>
</feature>
<keyword id="KW-0238">DNA-binding</keyword>
<keyword id="KW-1048">Host nucleus</keyword>
<keyword id="KW-0553">Oncogene</keyword>
<proteinExistence type="inferred from homology"/>